<sequence>MVGWLIYRLHLDPLSRIPGPLLAKFVPICNIRMVLTGRMMFTFKELHDTYGPVVRIGPSELSFATHSAFDTIYGPYGDKNFSLYGSRKGLLGSLDKENRRKLRPLVATSLNELLAAKGEEYCHLAMDEQLASHHVGQTEATPVSLSTLNNRYLWQFASMAANGNCGDETDRGTSFTNIFMGLSFMALTQVIAICFIFRQPVHPGEVNYDRDESPFPDNLHSRLQQAASRTSLHVPEYLLQINCFVLRFSIYGTADNMLNALFYFLLRNPQCLKRLEEEVSCVGATVNELSDDRLAKLPYLNACINETFRIAPAFNGGILQRVSCGATVDGVYVPPGVAVSVDHYTLGHDPQYWVKPDVFNPERWIDPDCKDNFKASRPFLIGARQCPGRQMAYQMFRVCVAKLVYLYTFELLNKDFDIERDTFSSYHWTGVKLDVTMKPRTPGVLGY</sequence>
<protein>
    <recommendedName>
        <fullName evidence="3">Cytochrome P450 monooxygenase aunB</fullName>
        <ecNumber evidence="2">1.-.-.-</ecNumber>
    </recommendedName>
    <alternativeName>
        <fullName evidence="3">Aurasperone B biosynthesis cluster protein B</fullName>
    </alternativeName>
</protein>
<gene>
    <name evidence="3" type="primary">aunB</name>
    <name type="ORF">An01g14990</name>
</gene>
<feature type="chain" id="PRO_0000449886" description="Cytochrome P450 monooxygenase aunB">
    <location>
        <begin position="1"/>
        <end position="447"/>
    </location>
</feature>
<feature type="binding site" description="axial binding residue" evidence="1">
    <location>
        <position position="386"/>
    </location>
    <ligand>
        <name>heme</name>
        <dbReference type="ChEBI" id="CHEBI:30413"/>
    </ligand>
    <ligandPart>
        <name>Fe</name>
        <dbReference type="ChEBI" id="CHEBI:18248"/>
    </ligandPart>
</feature>
<organism>
    <name type="scientific">Aspergillus niger (strain ATCC MYA-4892 / CBS 513.88 / FGSC A1513)</name>
    <dbReference type="NCBI Taxonomy" id="425011"/>
    <lineage>
        <taxon>Eukaryota</taxon>
        <taxon>Fungi</taxon>
        <taxon>Dikarya</taxon>
        <taxon>Ascomycota</taxon>
        <taxon>Pezizomycotina</taxon>
        <taxon>Eurotiomycetes</taxon>
        <taxon>Eurotiomycetidae</taxon>
        <taxon>Eurotiales</taxon>
        <taxon>Aspergillaceae</taxon>
        <taxon>Aspergillus</taxon>
        <taxon>Aspergillus subgen. Circumdati</taxon>
    </lineage>
</organism>
<comment type="function">
    <text evidence="2 5">Cytochrome P450 monooxygenase; part of the gene cluster that mediates the biosynthesis of aurasperone B, a dimeric gamma-naphthopyrone (PubMed:31067027). The first step in the biosynthesis of aurasperone B is the production of gamma-naphthopyrone precursor YWA1 by the non-reducing polyketide synthase albA, via condensation of one acetyl-CoA starter unit with 6 malonyl-CoA units (PubMed:31067027). YWA1 is then methylated by aunE at position C-6 to yield foncesin which is further methylated at position C-8 by aunD to produce fonsecin B (Probable). A key enzyme in the biosynthetic pathway is the cytochrome P450 monooxygenase aunB which catalyzes the oxidative dimerization of fonsecin B to aurasperone B (PubMed:31067027). AunB also catalyzes the oxidative dimerization of rubrofusarin B into aurasperone A (PubMed:31067027).</text>
</comment>
<comment type="catalytic activity">
    <reaction evidence="2">
        <text>2 fonsecin B + NADPH + O2 + H(+) = aurasperone B + NADP(+) + 2 H2O</text>
        <dbReference type="Rhea" id="RHEA:62788"/>
        <dbReference type="ChEBI" id="CHEBI:15377"/>
        <dbReference type="ChEBI" id="CHEBI:15378"/>
        <dbReference type="ChEBI" id="CHEBI:15379"/>
        <dbReference type="ChEBI" id="CHEBI:57783"/>
        <dbReference type="ChEBI" id="CHEBI:58349"/>
        <dbReference type="ChEBI" id="CHEBI:133756"/>
        <dbReference type="ChEBI" id="CHEBI:133825"/>
    </reaction>
    <physiologicalReaction direction="left-to-right" evidence="2">
        <dbReference type="Rhea" id="RHEA:62789"/>
    </physiologicalReaction>
</comment>
<comment type="catalytic activity">
    <reaction evidence="2">
        <text>2 rubrofusarin B + NADPH + O2 + H(+) = aurasperone A + NADP(+) + 2 H2O</text>
        <dbReference type="Rhea" id="RHEA:62796"/>
        <dbReference type="ChEBI" id="CHEBI:15377"/>
        <dbReference type="ChEBI" id="CHEBI:15378"/>
        <dbReference type="ChEBI" id="CHEBI:15379"/>
        <dbReference type="ChEBI" id="CHEBI:57783"/>
        <dbReference type="ChEBI" id="CHEBI:58349"/>
        <dbReference type="ChEBI" id="CHEBI:145920"/>
        <dbReference type="ChEBI" id="CHEBI:146001"/>
    </reaction>
    <physiologicalReaction direction="left-to-right" evidence="2">
        <dbReference type="Rhea" id="RHEA:62797"/>
    </physiologicalReaction>
</comment>
<comment type="cofactor">
    <cofactor evidence="1">
        <name>heme</name>
        <dbReference type="ChEBI" id="CHEBI:30413"/>
    </cofactor>
</comment>
<comment type="pathway">
    <text evidence="2">Secondary metabolite biosynthesis.</text>
</comment>
<comment type="disruption phenotype">
    <text evidence="2">Leads to the accumulation of the monomeric compounds fonsecin B and flavasperone.</text>
</comment>
<comment type="similarity">
    <text evidence="4">Belongs to the cytochrome P450 family.</text>
</comment>
<proteinExistence type="evidence at protein level"/>
<keyword id="KW-0349">Heme</keyword>
<keyword id="KW-0408">Iron</keyword>
<keyword id="KW-0479">Metal-binding</keyword>
<keyword id="KW-0503">Monooxygenase</keyword>
<keyword id="KW-0560">Oxidoreductase</keyword>
<keyword id="KW-1185">Reference proteome</keyword>
<dbReference type="EC" id="1.-.-.-" evidence="2"/>
<dbReference type="EMBL" id="AM269994">
    <property type="protein sequence ID" value="CAK37453.1"/>
    <property type="molecule type" value="Genomic_DNA"/>
</dbReference>
<dbReference type="SMR" id="A2QBE8"/>
<dbReference type="EnsemblFungi" id="CAK37453">
    <property type="protein sequence ID" value="CAK37453"/>
    <property type="gene ID" value="An01g14990"/>
</dbReference>
<dbReference type="VEuPathDB" id="FungiDB:An01g14990"/>
<dbReference type="HOGENOM" id="CLU_001570_14_11_1"/>
<dbReference type="Proteomes" id="UP000006706">
    <property type="component" value="Chromosome 2R"/>
</dbReference>
<dbReference type="GO" id="GO:0020037">
    <property type="term" value="F:heme binding"/>
    <property type="evidence" value="ECO:0007669"/>
    <property type="project" value="InterPro"/>
</dbReference>
<dbReference type="GO" id="GO:0005506">
    <property type="term" value="F:iron ion binding"/>
    <property type="evidence" value="ECO:0007669"/>
    <property type="project" value="InterPro"/>
</dbReference>
<dbReference type="GO" id="GO:0004497">
    <property type="term" value="F:monooxygenase activity"/>
    <property type="evidence" value="ECO:0007669"/>
    <property type="project" value="UniProtKB-KW"/>
</dbReference>
<dbReference type="GO" id="GO:0016705">
    <property type="term" value="F:oxidoreductase activity, acting on paired donors, with incorporation or reduction of molecular oxygen"/>
    <property type="evidence" value="ECO:0007669"/>
    <property type="project" value="InterPro"/>
</dbReference>
<dbReference type="Gene3D" id="1.10.630.10">
    <property type="entry name" value="Cytochrome P450"/>
    <property type="match status" value="1"/>
</dbReference>
<dbReference type="InterPro" id="IPR001128">
    <property type="entry name" value="Cyt_P450"/>
</dbReference>
<dbReference type="InterPro" id="IPR002401">
    <property type="entry name" value="Cyt_P450_E_grp-I"/>
</dbReference>
<dbReference type="InterPro" id="IPR036396">
    <property type="entry name" value="Cyt_P450_sf"/>
</dbReference>
<dbReference type="InterPro" id="IPR050121">
    <property type="entry name" value="Cytochrome_P450_monoxygenase"/>
</dbReference>
<dbReference type="PANTHER" id="PTHR24305">
    <property type="entry name" value="CYTOCHROME P450"/>
    <property type="match status" value="1"/>
</dbReference>
<dbReference type="PANTHER" id="PTHR24305:SF166">
    <property type="entry name" value="CYTOCHROME P450 12A4, MITOCHONDRIAL-RELATED"/>
    <property type="match status" value="1"/>
</dbReference>
<dbReference type="Pfam" id="PF00067">
    <property type="entry name" value="p450"/>
    <property type="match status" value="1"/>
</dbReference>
<dbReference type="PRINTS" id="PR00463">
    <property type="entry name" value="EP450I"/>
</dbReference>
<dbReference type="PRINTS" id="PR00385">
    <property type="entry name" value="P450"/>
</dbReference>
<dbReference type="SUPFAM" id="SSF48264">
    <property type="entry name" value="Cytochrome P450"/>
    <property type="match status" value="1"/>
</dbReference>
<name>AUNB_ASPNC</name>
<evidence type="ECO:0000250" key="1">
    <source>
        <dbReference type="UniProtKB" id="P04798"/>
    </source>
</evidence>
<evidence type="ECO:0000269" key="2">
    <source>
    </source>
</evidence>
<evidence type="ECO:0000303" key="3">
    <source>
    </source>
</evidence>
<evidence type="ECO:0000305" key="4"/>
<evidence type="ECO:0000305" key="5">
    <source>
    </source>
</evidence>
<reference key="1">
    <citation type="journal article" date="2007" name="Nat. Biotechnol.">
        <title>Genome sequencing and analysis of the versatile cell factory Aspergillus niger CBS 513.88.</title>
        <authorList>
            <person name="Pel H.J."/>
            <person name="de Winde J.H."/>
            <person name="Archer D.B."/>
            <person name="Dyer P.S."/>
            <person name="Hofmann G."/>
            <person name="Schaap P.J."/>
            <person name="Turner G."/>
            <person name="de Vries R.P."/>
            <person name="Albang R."/>
            <person name="Albermann K."/>
            <person name="Andersen M.R."/>
            <person name="Bendtsen J.D."/>
            <person name="Benen J.A.E."/>
            <person name="van den Berg M."/>
            <person name="Breestraat S."/>
            <person name="Caddick M.X."/>
            <person name="Contreras R."/>
            <person name="Cornell M."/>
            <person name="Coutinho P.M."/>
            <person name="Danchin E.G.J."/>
            <person name="Debets A.J.M."/>
            <person name="Dekker P."/>
            <person name="van Dijck P.W.M."/>
            <person name="van Dijk A."/>
            <person name="Dijkhuizen L."/>
            <person name="Driessen A.J.M."/>
            <person name="d'Enfert C."/>
            <person name="Geysens S."/>
            <person name="Goosen C."/>
            <person name="Groot G.S.P."/>
            <person name="de Groot P.W.J."/>
            <person name="Guillemette T."/>
            <person name="Henrissat B."/>
            <person name="Herweijer M."/>
            <person name="van den Hombergh J.P.T.W."/>
            <person name="van den Hondel C.A.M.J.J."/>
            <person name="van der Heijden R.T.J.M."/>
            <person name="van der Kaaij R.M."/>
            <person name="Klis F.M."/>
            <person name="Kools H.J."/>
            <person name="Kubicek C.P."/>
            <person name="van Kuyk P.A."/>
            <person name="Lauber J."/>
            <person name="Lu X."/>
            <person name="van der Maarel M.J.E.C."/>
            <person name="Meulenberg R."/>
            <person name="Menke H."/>
            <person name="Mortimer M.A."/>
            <person name="Nielsen J."/>
            <person name="Oliver S.G."/>
            <person name="Olsthoorn M."/>
            <person name="Pal K."/>
            <person name="van Peij N.N.M.E."/>
            <person name="Ram A.F.J."/>
            <person name="Rinas U."/>
            <person name="Roubos J.A."/>
            <person name="Sagt C.M.J."/>
            <person name="Schmoll M."/>
            <person name="Sun J."/>
            <person name="Ussery D."/>
            <person name="Varga J."/>
            <person name="Vervecken W."/>
            <person name="van de Vondervoort P.J.J."/>
            <person name="Wedler H."/>
            <person name="Woesten H.A.B."/>
            <person name="Zeng A.-P."/>
            <person name="van Ooyen A.J.J."/>
            <person name="Visser J."/>
            <person name="Stam H."/>
        </authorList>
    </citation>
    <scope>NUCLEOTIDE SEQUENCE [LARGE SCALE GENOMIC DNA]</scope>
    <source>
        <strain>ATCC MYA-4892 / CBS 513.88 / FGSC A1513</strain>
    </source>
</reference>
<reference key="2">
    <citation type="journal article" date="2019" name="Biochemistry">
        <title>Biaryl-forming enzymes from Aspergilli exhibit substrate-dependent stereoselectivity.</title>
        <authorList>
            <person name="Obermaier S."/>
            <person name="Mueller M."/>
        </authorList>
    </citation>
    <scope>FUNCTION</scope>
    <scope>DISRUPTION PHENOTYPE</scope>
    <scope>CATALYTIC ACTIVITY</scope>
    <scope>PATHWAY</scope>
</reference>
<accession>A2QBE8</accession>